<protein>
    <recommendedName>
        <fullName>Naringenin,2-oxoglutarate 3-dioxygenase</fullName>
        <ecNumber evidence="1">1.14.11.9</ecNumber>
    </recommendedName>
    <alternativeName>
        <fullName>FHT</fullName>
    </alternativeName>
    <alternativeName>
        <fullName>Flavanone-3-hydroxylase</fullName>
        <shortName>F3H</shortName>
    </alternativeName>
</protein>
<organism>
    <name type="scientific">Petunia hybrida</name>
    <name type="common">Petunia</name>
    <dbReference type="NCBI Taxonomy" id="4102"/>
    <lineage>
        <taxon>Eukaryota</taxon>
        <taxon>Viridiplantae</taxon>
        <taxon>Streptophyta</taxon>
        <taxon>Embryophyta</taxon>
        <taxon>Tracheophyta</taxon>
        <taxon>Spermatophyta</taxon>
        <taxon>Magnoliopsida</taxon>
        <taxon>eudicotyledons</taxon>
        <taxon>Gunneridae</taxon>
        <taxon>Pentapetalae</taxon>
        <taxon>asterids</taxon>
        <taxon>lamiids</taxon>
        <taxon>Solanales</taxon>
        <taxon>Solanaceae</taxon>
        <taxon>Petunioideae</taxon>
        <taxon>Petunia</taxon>
    </lineage>
</organism>
<sequence>IPRVTPSTLTALAEEKTLQTSFIRDEDERPKVAYNQFSNEIPIISLEGIDDETGKRAEICDKIVKACEDWGVFQVVDHGVDAEVISQMTTFAKEFFALPPEEKLRFDMSGGKKGGFIVSSHLQGEVVQDWREIVTYFSYPTRARDYSRWPDKPEGWIAVTQKYSEKLMELACKLLDVLSEAMGLEKEALTKACVDMDQKVVVNFYPKCPEPDLTLGLKRHTDPGTITLLLQDQVGGLQATKDNGKTWITVQPVEGAFVVNLGDHGHFLSNGRFKNADHQAVVNSNSSRLSIATFQNPAPEAIVYPLKIREGEKSIMDEPITFAEMYRRKMSKDLELARLKKQAKEQQLQAEVAAEKAKLESKPIEEILA</sequence>
<keyword id="KW-0223">Dioxygenase</keyword>
<keyword id="KW-0903">Direct protein sequencing</keyword>
<keyword id="KW-0284">Flavonoid biosynthesis</keyword>
<keyword id="KW-0408">Iron</keyword>
<keyword id="KW-0479">Metal-binding</keyword>
<keyword id="KW-0560">Oxidoreductase</keyword>
<keyword id="KW-0847">Vitamin C</keyword>
<reference key="1">
    <citation type="journal article" date="1992" name="J. Biol. Chem.">
        <title>Molecular cloning, sequence analysis, and in vitro expression of flavanone 3 beta-hydroxylase from Petunia hybrida.</title>
        <authorList>
            <person name="Britsch L."/>
            <person name="Ruhnau-Brich B."/>
            <person name="Forkmann G."/>
        </authorList>
    </citation>
    <scope>NUCLEOTIDE SEQUENCE [MRNA]</scope>
    <scope>PARTIAL PROTEIN SEQUENCE</scope>
    <source>
        <strain>cv. Blue Titan</strain>
        <tissue>Flower bud</tissue>
    </source>
</reference>
<feature type="chain" id="PRO_0000067289" description="Naringenin,2-oxoglutarate 3-dioxygenase">
    <location>
        <begin position="1" status="less than"/>
        <end position="369"/>
    </location>
</feature>
<feature type="domain" description="Fe2OG dioxygenase" evidence="2">
    <location>
        <begin position="193"/>
        <end position="297"/>
    </location>
</feature>
<feature type="binding site" evidence="2">
    <location>
        <position position="220"/>
    </location>
    <ligand>
        <name>Fe cation</name>
        <dbReference type="ChEBI" id="CHEBI:24875"/>
    </ligand>
</feature>
<feature type="binding site" evidence="2">
    <location>
        <position position="222"/>
    </location>
    <ligand>
        <name>Fe cation</name>
        <dbReference type="ChEBI" id="CHEBI:24875"/>
    </ligand>
</feature>
<feature type="binding site" evidence="2">
    <location>
        <position position="278"/>
    </location>
    <ligand>
        <name>Fe cation</name>
        <dbReference type="ChEBI" id="CHEBI:24875"/>
    </ligand>
</feature>
<feature type="binding site" evidence="2">
    <location>
        <position position="288"/>
    </location>
    <ligand>
        <name>2-oxoglutarate</name>
        <dbReference type="ChEBI" id="CHEBI:16810"/>
    </ligand>
</feature>
<feature type="non-terminal residue">
    <location>
        <position position="1"/>
    </location>
</feature>
<comment type="function">
    <text>Catalyzes the 3-beta-hydroxylation of 2S-flavanones to 2R,3R-dihydroflavonols which are intermediates in the biosynthesis of flavonols, anthocyanidins, catechins and proanthocyanidins in plants.</text>
</comment>
<comment type="catalytic activity">
    <reaction evidence="1">
        <text>a (2S)-flavan-4-one + 2-oxoglutarate + O2 = a (2R,3R)-dihydroflavonol + succinate + CO2</text>
        <dbReference type="Rhea" id="RHEA:18621"/>
        <dbReference type="ChEBI" id="CHEBI:15379"/>
        <dbReference type="ChEBI" id="CHEBI:16526"/>
        <dbReference type="ChEBI" id="CHEBI:16810"/>
        <dbReference type="ChEBI" id="CHEBI:30031"/>
        <dbReference type="ChEBI" id="CHEBI:138188"/>
        <dbReference type="ChEBI" id="CHEBI:140377"/>
        <dbReference type="EC" id="1.14.11.9"/>
    </reaction>
</comment>
<comment type="cofactor">
    <cofactor evidence="2">
        <name>Fe(2+)</name>
        <dbReference type="ChEBI" id="CHEBI:29033"/>
    </cofactor>
    <text evidence="2">Binds 1 Fe(2+) ion per subunit.</text>
</comment>
<comment type="cofactor">
    <cofactor>
        <name>L-ascorbate</name>
        <dbReference type="ChEBI" id="CHEBI:38290"/>
    </cofactor>
</comment>
<comment type="pathway">
    <text>Secondary metabolite biosynthesis; flavonoid biosynthesis.</text>
</comment>
<comment type="similarity">
    <text evidence="3">Belongs to the iron/ascorbate-dependent oxidoreductase family.</text>
</comment>
<dbReference type="EC" id="1.14.11.9" evidence="1"/>
<dbReference type="EMBL" id="X60512">
    <property type="protein sequence ID" value="CAA43027.1"/>
    <property type="molecule type" value="mRNA"/>
</dbReference>
<dbReference type="PIR" id="A42110">
    <property type="entry name" value="A42110"/>
</dbReference>
<dbReference type="PIR" id="S16780">
    <property type="entry name" value="S16780"/>
</dbReference>
<dbReference type="SMR" id="Q07353"/>
<dbReference type="BioCyc" id="MetaCyc:MONOMER-11838"/>
<dbReference type="UniPathway" id="UPA00154"/>
<dbReference type="GO" id="GO:0045486">
    <property type="term" value="F:flavanone 3-dioxygenase activity"/>
    <property type="evidence" value="ECO:0007669"/>
    <property type="project" value="UniProtKB-EC"/>
</dbReference>
<dbReference type="GO" id="GO:0031418">
    <property type="term" value="F:L-ascorbic acid binding"/>
    <property type="evidence" value="ECO:0007669"/>
    <property type="project" value="UniProtKB-KW"/>
</dbReference>
<dbReference type="GO" id="GO:0046872">
    <property type="term" value="F:metal ion binding"/>
    <property type="evidence" value="ECO:0007669"/>
    <property type="project" value="UniProtKB-KW"/>
</dbReference>
<dbReference type="GO" id="GO:0009805">
    <property type="term" value="P:coumarin biosynthetic process"/>
    <property type="evidence" value="ECO:0007669"/>
    <property type="project" value="UniProtKB-ARBA"/>
</dbReference>
<dbReference type="GO" id="GO:0009813">
    <property type="term" value="P:flavonoid biosynthetic process"/>
    <property type="evidence" value="ECO:0007669"/>
    <property type="project" value="UniProtKB-UniPathway"/>
</dbReference>
<dbReference type="GO" id="GO:0002238">
    <property type="term" value="P:response to molecule of fungal origin"/>
    <property type="evidence" value="ECO:0007669"/>
    <property type="project" value="UniProtKB-ARBA"/>
</dbReference>
<dbReference type="FunFam" id="2.60.120.330:FF:000016">
    <property type="entry name" value="Naringenin,2-oxoglutarate 3-dioxygenase"/>
    <property type="match status" value="1"/>
</dbReference>
<dbReference type="Gene3D" id="2.60.120.330">
    <property type="entry name" value="B-lactam Antibiotic, Isopenicillin N Synthase, Chain"/>
    <property type="match status" value="1"/>
</dbReference>
<dbReference type="InterPro" id="IPR026992">
    <property type="entry name" value="DIOX_N"/>
</dbReference>
<dbReference type="InterPro" id="IPR044861">
    <property type="entry name" value="IPNS-like_FE2OG_OXY"/>
</dbReference>
<dbReference type="InterPro" id="IPR027443">
    <property type="entry name" value="IPNS-like_sf"/>
</dbReference>
<dbReference type="InterPro" id="IPR005123">
    <property type="entry name" value="Oxoglu/Fe-dep_dioxygenase_dom"/>
</dbReference>
<dbReference type="InterPro" id="IPR050295">
    <property type="entry name" value="Plant_2OG-oxidoreductases"/>
</dbReference>
<dbReference type="PANTHER" id="PTHR47991">
    <property type="entry name" value="OXOGLUTARATE/IRON-DEPENDENT DIOXYGENASE"/>
    <property type="match status" value="1"/>
</dbReference>
<dbReference type="Pfam" id="PF03171">
    <property type="entry name" value="2OG-FeII_Oxy"/>
    <property type="match status" value="1"/>
</dbReference>
<dbReference type="Pfam" id="PF14226">
    <property type="entry name" value="DIOX_N"/>
    <property type="match status" value="1"/>
</dbReference>
<dbReference type="SUPFAM" id="SSF51197">
    <property type="entry name" value="Clavaminate synthase-like"/>
    <property type="match status" value="1"/>
</dbReference>
<dbReference type="PROSITE" id="PS51471">
    <property type="entry name" value="FE2OG_OXY"/>
    <property type="match status" value="1"/>
</dbReference>
<proteinExistence type="evidence at protein level"/>
<evidence type="ECO:0000250" key="1">
    <source>
        <dbReference type="UniProtKB" id="Q7XZQ7"/>
    </source>
</evidence>
<evidence type="ECO:0000255" key="2">
    <source>
        <dbReference type="PROSITE-ProRule" id="PRU00805"/>
    </source>
</evidence>
<evidence type="ECO:0000305" key="3"/>
<name>FL3H_PETHY</name>
<accession>Q07353</accession>
<gene>
    <name type="primary">AN3</name>
</gene>